<gene>
    <name type="primary">ycf15-A</name>
</gene>
<gene>
    <name type="primary">ycf15-B</name>
</gene>
<name>YCF15_SOLLC</name>
<proteinExistence type="uncertain"/>
<keyword id="KW-0150">Chloroplast</keyword>
<keyword id="KW-0934">Plastid</keyword>
<keyword id="KW-1185">Reference proteome</keyword>
<accession>Q2MI39</accession>
<geneLocation type="chloroplast"/>
<dbReference type="EMBL" id="DQ347959">
    <property type="protein sequence ID" value="ABC56344.1"/>
    <property type="molecule type" value="Genomic_DNA"/>
</dbReference>
<dbReference type="EMBL" id="DQ347959">
    <property type="protein sequence ID" value="ABC56363.1"/>
    <property type="molecule type" value="Genomic_DNA"/>
</dbReference>
<dbReference type="EMBL" id="AM087200">
    <property type="protein sequence ID" value="CAJ32438.1"/>
    <property type="molecule type" value="Genomic_DNA"/>
</dbReference>
<dbReference type="EMBL" id="AM087200">
    <property type="protein sequence ID" value="CAJ32456.1"/>
    <property type="molecule type" value="Genomic_DNA"/>
</dbReference>
<dbReference type="RefSeq" id="AP_004972.1">
    <property type="nucleotide sequence ID" value="AC_000188.1"/>
</dbReference>
<dbReference type="RefSeq" id="AP_004990.1">
    <property type="nucleotide sequence ID" value="AC_000188.1"/>
</dbReference>
<dbReference type="STRING" id="4081.Q2MI39"/>
<dbReference type="PaxDb" id="4081-Solyc11g021080.1.1"/>
<dbReference type="KEGG" id="sly:16976784"/>
<dbReference type="KEGG" id="sly:3950376"/>
<dbReference type="eggNOG" id="ENOG502QRDV">
    <property type="taxonomic scope" value="Eukaryota"/>
</dbReference>
<dbReference type="InParanoid" id="Q2MI39"/>
<dbReference type="OrthoDB" id="864666at2759"/>
<dbReference type="Proteomes" id="UP000004994">
    <property type="component" value="Chloroplast"/>
</dbReference>
<dbReference type="GO" id="GO:0009507">
    <property type="term" value="C:chloroplast"/>
    <property type="evidence" value="ECO:0007669"/>
    <property type="project" value="UniProtKB-SubCell"/>
</dbReference>
<dbReference type="InterPro" id="IPR019645">
    <property type="entry name" value="Uncharacterised_Ycf15"/>
</dbReference>
<dbReference type="Pfam" id="PF10705">
    <property type="entry name" value="Ycf15"/>
    <property type="match status" value="1"/>
</dbReference>
<evidence type="ECO:0000305" key="1"/>
<protein>
    <recommendedName>
        <fullName>Putative uncharacterized protein ycf15</fullName>
    </recommendedName>
</protein>
<comment type="subcellular location">
    <subcellularLocation>
        <location>Plastid</location>
        <location>Chloroplast</location>
    </subcellularLocation>
</comment>
<comment type="similarity">
    <text evidence="1">Belongs to the ycf15 family.</text>
</comment>
<comment type="caution">
    <text evidence="1">Could be the product of a pseudogene.</text>
</comment>
<sequence length="87" mass="10557">METLVSSIFWTLAPWKNMLLLKHGRIEILDQNTMYGWYELPKQEFLNSKQPVQIFTTKKYWILFRIGPERRRKAGMPIGVYYIEFTR</sequence>
<organism>
    <name type="scientific">Solanum lycopersicum</name>
    <name type="common">Tomato</name>
    <name type="synonym">Lycopersicon esculentum</name>
    <dbReference type="NCBI Taxonomy" id="4081"/>
    <lineage>
        <taxon>Eukaryota</taxon>
        <taxon>Viridiplantae</taxon>
        <taxon>Streptophyta</taxon>
        <taxon>Embryophyta</taxon>
        <taxon>Tracheophyta</taxon>
        <taxon>Spermatophyta</taxon>
        <taxon>Magnoliopsida</taxon>
        <taxon>eudicotyledons</taxon>
        <taxon>Gunneridae</taxon>
        <taxon>Pentapetalae</taxon>
        <taxon>asterids</taxon>
        <taxon>lamiids</taxon>
        <taxon>Solanales</taxon>
        <taxon>Solanaceae</taxon>
        <taxon>Solanoideae</taxon>
        <taxon>Solaneae</taxon>
        <taxon>Solanum</taxon>
        <taxon>Solanum subgen. Lycopersicon</taxon>
    </lineage>
</organism>
<reference key="1">
    <citation type="journal article" date="2006" name="Theor. Appl. Genet.">
        <title>Complete chloroplast genome sequences of Solanum bulbocastanum, Solanum lycopersicum and comparative analyses with other Solanaceae genomes.</title>
        <authorList>
            <person name="Daniell H."/>
            <person name="Lee S.-B."/>
            <person name="Grevich J."/>
            <person name="Saski C."/>
            <person name="Quesada-Vargas T."/>
            <person name="Guda C."/>
            <person name="Tomkins J."/>
            <person name="Jansen R.K."/>
        </authorList>
    </citation>
    <scope>NUCLEOTIDE SEQUENCE [LARGE SCALE GENOMIC DNA]</scope>
    <source>
        <strain>cv. LA3023</strain>
    </source>
</reference>
<reference key="2">
    <citation type="journal article" date="2006" name="J. Mol. Evol.">
        <title>Sequence of the tomato chloroplast DNA and evolutionary comparison of solanaceous plastid genomes.</title>
        <authorList>
            <person name="Kahlau S."/>
            <person name="Aspinall S."/>
            <person name="Gray J.C."/>
            <person name="Bock R."/>
        </authorList>
    </citation>
    <scope>NUCLEOTIDE SEQUENCE [LARGE SCALE GENOMIC DNA]</scope>
    <source>
        <strain>cv. IPA-6</strain>
    </source>
</reference>
<feature type="chain" id="PRO_0000277352" description="Putative uncharacterized protein ycf15">
    <location>
        <begin position="1"/>
        <end position="87"/>
    </location>
</feature>